<name>RMA2_ARATH</name>
<protein>
    <recommendedName>
        <fullName>E3 ubiquitin-protein ligase RMA2</fullName>
        <ecNumber>2.3.2.27</ecNumber>
    </recommendedName>
    <alternativeName>
        <fullName>Protein RING membrane-anchor 2</fullName>
    </alternativeName>
    <alternativeName>
        <fullName evidence="7">RING-type E3 ubiquitin transferase RMA2</fullName>
    </alternativeName>
</protein>
<proteinExistence type="evidence at protein level"/>
<evidence type="ECO:0000255" key="1"/>
<evidence type="ECO:0000255" key="2">
    <source>
        <dbReference type="PROSITE-ProRule" id="PRU00175"/>
    </source>
</evidence>
<evidence type="ECO:0000269" key="3">
    <source>
    </source>
</evidence>
<evidence type="ECO:0000269" key="4">
    <source>
    </source>
</evidence>
<evidence type="ECO:0000269" key="5">
    <source>
    </source>
</evidence>
<evidence type="ECO:0000269" key="6">
    <source>
    </source>
</evidence>
<evidence type="ECO:0000305" key="7"/>
<keyword id="KW-0256">Endoplasmic reticulum</keyword>
<keyword id="KW-0472">Membrane</keyword>
<keyword id="KW-0479">Metal-binding</keyword>
<keyword id="KW-1185">Reference proteome</keyword>
<keyword id="KW-0808">Transferase</keyword>
<keyword id="KW-0812">Transmembrane</keyword>
<keyword id="KW-1133">Transmembrane helix</keyword>
<keyword id="KW-0833">Ubl conjugation pathway</keyword>
<keyword id="KW-0862">Zinc</keyword>
<keyword id="KW-0863">Zinc-finger</keyword>
<comment type="function">
    <text evidence="3 5">E3 ubiquitin-protein ligase that promotes the ubiquitination and proteasomal degradation of the auxin-binding protein ERABP1.</text>
</comment>
<comment type="catalytic activity">
    <reaction>
        <text>S-ubiquitinyl-[E2 ubiquitin-conjugating enzyme]-L-cysteine + [acceptor protein]-L-lysine = [E2 ubiquitin-conjugating enzyme]-L-cysteine + N(6)-ubiquitinyl-[acceptor protein]-L-lysine.</text>
        <dbReference type="EC" id="2.3.2.27"/>
    </reaction>
</comment>
<comment type="pathway">
    <text>Protein modification; protein ubiquitination.</text>
</comment>
<comment type="subunit">
    <text evidence="5">Interacts with ERABP1.</text>
</comment>
<comment type="subcellular location">
    <subcellularLocation>
        <location evidence="3">Endoplasmic reticulum membrane</location>
        <topology evidence="3">Single-pass type IV membrane protein</topology>
    </subcellularLocation>
</comment>
<comment type="tissue specificity">
    <text evidence="3 6">Barely detected in roots and limited to the root tips. Expressed in leaf hydathodes and in siliques.</text>
</comment>
<comment type="developmental stage">
    <text evidence="6">Expressed during seed development.</text>
</comment>
<comment type="domain">
    <text>The RING-type zinc finger domain is required for E3 ligase activity.</text>
</comment>
<comment type="disruption phenotype">
    <text evidence="4">No visible phenotype and no effect on drought stress response, probably due to the redundancy with RMA1 and RMA3.</text>
</comment>
<feature type="chain" id="PRO_0000395674" description="E3 ubiquitin-protein ligase RMA2">
    <location>
        <begin position="1"/>
        <end position="193"/>
    </location>
</feature>
<feature type="transmembrane region" description="Helical; Anchor for type IV membrane protein" evidence="1">
    <location>
        <begin position="175"/>
        <end position="192"/>
    </location>
</feature>
<feature type="zinc finger region" description="RING-type" evidence="2">
    <location>
        <begin position="21"/>
        <end position="75"/>
    </location>
</feature>
<feature type="mutagenesis site" description="Strong reduction of ubiquitin ligase activity." evidence="3">
    <original>C</original>
    <variation>S</variation>
    <location>
        <position position="36"/>
    </location>
</feature>
<sequence>MEIEKDEDDTTLVDSGGDFDCNICLDQVRDPVVTLCGHLFCWPCIHKWTYASNNSRQRVDQYDHKREPPKCPVCKSDVSEATLVPIYGRGQKAPQSGSNVPSRPTGPVYDLRGVGQRLGEGESQRYMYRMPDPVMGVVCEMVYRRLFGESSSNMAPYRDMNVRSRRRAMQAEESLSRVYLFLLCFMFMCLFLF</sequence>
<accession>P93030</accession>
<gene>
    <name type="primary">RMA2</name>
    <name type="synonym">A-RZF</name>
    <name type="ordered locus">At4g28270</name>
    <name type="ORF">F26K10.15</name>
</gene>
<dbReference type="EC" id="2.3.2.27"/>
<dbReference type="EMBL" id="U81598">
    <property type="protein sequence ID" value="AAC49830.1"/>
    <property type="molecule type" value="Genomic_DNA"/>
</dbReference>
<dbReference type="EMBL" id="AL161572">
    <property type="protein sequence ID" value="CAB79629.1"/>
    <property type="molecule type" value="Genomic_DNA"/>
</dbReference>
<dbReference type="EMBL" id="CP002687">
    <property type="protein sequence ID" value="AEE85462.1"/>
    <property type="molecule type" value="Genomic_DNA"/>
</dbReference>
<dbReference type="EMBL" id="BT003053">
    <property type="protein sequence ID" value="AAO23618.1"/>
    <property type="molecule type" value="mRNA"/>
</dbReference>
<dbReference type="EMBL" id="AK227310">
    <property type="protein sequence ID" value="BAE99326.1"/>
    <property type="molecule type" value="mRNA"/>
</dbReference>
<dbReference type="PIR" id="T09043">
    <property type="entry name" value="T09043"/>
</dbReference>
<dbReference type="RefSeq" id="NP_194556.1">
    <property type="nucleotide sequence ID" value="NM_118967.3"/>
</dbReference>
<dbReference type="SMR" id="P93030"/>
<dbReference type="BioGRID" id="14229">
    <property type="interactions" value="2"/>
</dbReference>
<dbReference type="IntAct" id="P93030">
    <property type="interactions" value="1"/>
</dbReference>
<dbReference type="STRING" id="3702.P93030"/>
<dbReference type="TCDB" id="3.A.16.1.5">
    <property type="family name" value="the endoplasmic reticular retrotranslocon (er-rt) family"/>
</dbReference>
<dbReference type="PaxDb" id="3702-AT4G28270.1"/>
<dbReference type="ProteomicsDB" id="227983"/>
<dbReference type="EnsemblPlants" id="AT4G28270.1">
    <property type="protein sequence ID" value="AT4G28270.1"/>
    <property type="gene ID" value="AT4G28270"/>
</dbReference>
<dbReference type="GeneID" id="828942"/>
<dbReference type="Gramene" id="AT4G28270.1">
    <property type="protein sequence ID" value="AT4G28270.1"/>
    <property type="gene ID" value="AT4G28270"/>
</dbReference>
<dbReference type="KEGG" id="ath:AT4G28270"/>
<dbReference type="Araport" id="AT4G28270"/>
<dbReference type="TAIR" id="AT4G28270">
    <property type="gene designation" value="RMA2"/>
</dbReference>
<dbReference type="eggNOG" id="KOG0823">
    <property type="taxonomic scope" value="Eukaryota"/>
</dbReference>
<dbReference type="HOGENOM" id="CLU_055198_1_2_1"/>
<dbReference type="InParanoid" id="P93030"/>
<dbReference type="OMA" id="KREPPKC"/>
<dbReference type="OrthoDB" id="6270329at2759"/>
<dbReference type="PhylomeDB" id="P93030"/>
<dbReference type="BRENDA" id="2.3.2.27">
    <property type="organism ID" value="399"/>
</dbReference>
<dbReference type="UniPathway" id="UPA00143"/>
<dbReference type="PRO" id="PR:P93030"/>
<dbReference type="Proteomes" id="UP000006548">
    <property type="component" value="Chromosome 4"/>
</dbReference>
<dbReference type="ExpressionAtlas" id="P93030">
    <property type="expression patterns" value="baseline and differential"/>
</dbReference>
<dbReference type="GO" id="GO:0005783">
    <property type="term" value="C:endoplasmic reticulum"/>
    <property type="evidence" value="ECO:0000314"/>
    <property type="project" value="TAIR"/>
</dbReference>
<dbReference type="GO" id="GO:0005789">
    <property type="term" value="C:endoplasmic reticulum membrane"/>
    <property type="evidence" value="ECO:0007669"/>
    <property type="project" value="UniProtKB-SubCell"/>
</dbReference>
<dbReference type="GO" id="GO:0061630">
    <property type="term" value="F:ubiquitin protein ligase activity"/>
    <property type="evidence" value="ECO:0007669"/>
    <property type="project" value="InterPro"/>
</dbReference>
<dbReference type="GO" id="GO:0004842">
    <property type="term" value="F:ubiquitin-protein transferase activity"/>
    <property type="evidence" value="ECO:0000314"/>
    <property type="project" value="TAIR"/>
</dbReference>
<dbReference type="GO" id="GO:0008270">
    <property type="term" value="F:zinc ion binding"/>
    <property type="evidence" value="ECO:0007669"/>
    <property type="project" value="UniProtKB-KW"/>
</dbReference>
<dbReference type="GO" id="GO:0016567">
    <property type="term" value="P:protein ubiquitination"/>
    <property type="evidence" value="ECO:0007669"/>
    <property type="project" value="UniProtKB-UniPathway"/>
</dbReference>
<dbReference type="GO" id="GO:0006511">
    <property type="term" value="P:ubiquitin-dependent protein catabolic process"/>
    <property type="evidence" value="ECO:0007669"/>
    <property type="project" value="InterPro"/>
</dbReference>
<dbReference type="Gene3D" id="3.30.40.10">
    <property type="entry name" value="Zinc/RING finger domain, C3HC4 (zinc finger)"/>
    <property type="match status" value="1"/>
</dbReference>
<dbReference type="InterPro" id="IPR045103">
    <property type="entry name" value="RNF5/RNF185-like"/>
</dbReference>
<dbReference type="InterPro" id="IPR027370">
    <property type="entry name" value="Znf-RING_euk"/>
</dbReference>
<dbReference type="InterPro" id="IPR001841">
    <property type="entry name" value="Znf_RING"/>
</dbReference>
<dbReference type="InterPro" id="IPR013083">
    <property type="entry name" value="Znf_RING/FYVE/PHD"/>
</dbReference>
<dbReference type="InterPro" id="IPR017907">
    <property type="entry name" value="Znf_RING_CS"/>
</dbReference>
<dbReference type="PANTHER" id="PTHR12313">
    <property type="entry name" value="E3 UBIQUITIN-PROTEIN LIGASE RNF5-RELATED"/>
    <property type="match status" value="1"/>
</dbReference>
<dbReference type="Pfam" id="PF13445">
    <property type="entry name" value="zf-RING_UBOX"/>
    <property type="match status" value="1"/>
</dbReference>
<dbReference type="SMART" id="SM00184">
    <property type="entry name" value="RING"/>
    <property type="match status" value="1"/>
</dbReference>
<dbReference type="SUPFAM" id="SSF57850">
    <property type="entry name" value="RING/U-box"/>
    <property type="match status" value="1"/>
</dbReference>
<dbReference type="PROSITE" id="PS00518">
    <property type="entry name" value="ZF_RING_1"/>
    <property type="match status" value="1"/>
</dbReference>
<dbReference type="PROSITE" id="PS50089">
    <property type="entry name" value="ZF_RING_2"/>
    <property type="match status" value="1"/>
</dbReference>
<organism>
    <name type="scientific">Arabidopsis thaliana</name>
    <name type="common">Mouse-ear cress</name>
    <dbReference type="NCBI Taxonomy" id="3702"/>
    <lineage>
        <taxon>Eukaryota</taxon>
        <taxon>Viridiplantae</taxon>
        <taxon>Streptophyta</taxon>
        <taxon>Embryophyta</taxon>
        <taxon>Tracheophyta</taxon>
        <taxon>Spermatophyta</taxon>
        <taxon>Magnoliopsida</taxon>
        <taxon>eudicotyledons</taxon>
        <taxon>Gunneridae</taxon>
        <taxon>Pentapetalae</taxon>
        <taxon>rosids</taxon>
        <taxon>malvids</taxon>
        <taxon>Brassicales</taxon>
        <taxon>Brassicaceae</taxon>
        <taxon>Camelineae</taxon>
        <taxon>Arabidopsis</taxon>
    </lineage>
</organism>
<reference key="1">
    <citation type="journal article" date="1997" name="Gene">
        <title>Cloning and molecular characterization of an Arabidopsis thaliana RING zinc finger gene expressed preferentially during seed development.</title>
        <authorList>
            <person name="Zou J."/>
            <person name="Taylor D.C."/>
        </authorList>
    </citation>
    <scope>NUCLEOTIDE SEQUENCE [GENOMIC DNA]</scope>
    <scope>TISSUE SPECIFICITY</scope>
    <scope>DEVELOPMENTAL STAGE</scope>
</reference>
<reference key="2">
    <citation type="journal article" date="1999" name="Nature">
        <title>Sequence and analysis of chromosome 4 of the plant Arabidopsis thaliana.</title>
        <authorList>
            <person name="Mayer K.F.X."/>
            <person name="Schueller C."/>
            <person name="Wambutt R."/>
            <person name="Murphy G."/>
            <person name="Volckaert G."/>
            <person name="Pohl T."/>
            <person name="Duesterhoeft A."/>
            <person name="Stiekema W."/>
            <person name="Entian K.-D."/>
            <person name="Terryn N."/>
            <person name="Harris B."/>
            <person name="Ansorge W."/>
            <person name="Brandt P."/>
            <person name="Grivell L.A."/>
            <person name="Rieger M."/>
            <person name="Weichselgartner M."/>
            <person name="de Simone V."/>
            <person name="Obermaier B."/>
            <person name="Mache R."/>
            <person name="Mueller M."/>
            <person name="Kreis M."/>
            <person name="Delseny M."/>
            <person name="Puigdomenech P."/>
            <person name="Watson M."/>
            <person name="Schmidtheini T."/>
            <person name="Reichert B."/>
            <person name="Portetelle D."/>
            <person name="Perez-Alonso M."/>
            <person name="Boutry M."/>
            <person name="Bancroft I."/>
            <person name="Vos P."/>
            <person name="Hoheisel J."/>
            <person name="Zimmermann W."/>
            <person name="Wedler H."/>
            <person name="Ridley P."/>
            <person name="Langham S.-A."/>
            <person name="McCullagh B."/>
            <person name="Bilham L."/>
            <person name="Robben J."/>
            <person name="van der Schueren J."/>
            <person name="Grymonprez B."/>
            <person name="Chuang Y.-J."/>
            <person name="Vandenbussche F."/>
            <person name="Braeken M."/>
            <person name="Weltjens I."/>
            <person name="Voet M."/>
            <person name="Bastiaens I."/>
            <person name="Aert R."/>
            <person name="Defoor E."/>
            <person name="Weitzenegger T."/>
            <person name="Bothe G."/>
            <person name="Ramsperger U."/>
            <person name="Hilbert H."/>
            <person name="Braun M."/>
            <person name="Holzer E."/>
            <person name="Brandt A."/>
            <person name="Peters S."/>
            <person name="van Staveren M."/>
            <person name="Dirkse W."/>
            <person name="Mooijman P."/>
            <person name="Klein Lankhorst R."/>
            <person name="Rose M."/>
            <person name="Hauf J."/>
            <person name="Koetter P."/>
            <person name="Berneiser S."/>
            <person name="Hempel S."/>
            <person name="Feldpausch M."/>
            <person name="Lamberth S."/>
            <person name="Van den Daele H."/>
            <person name="De Keyser A."/>
            <person name="Buysshaert C."/>
            <person name="Gielen J."/>
            <person name="Villarroel R."/>
            <person name="De Clercq R."/>
            <person name="van Montagu M."/>
            <person name="Rogers J."/>
            <person name="Cronin A."/>
            <person name="Quail M.A."/>
            <person name="Bray-Allen S."/>
            <person name="Clark L."/>
            <person name="Doggett J."/>
            <person name="Hall S."/>
            <person name="Kay M."/>
            <person name="Lennard N."/>
            <person name="McLay K."/>
            <person name="Mayes R."/>
            <person name="Pettett A."/>
            <person name="Rajandream M.A."/>
            <person name="Lyne M."/>
            <person name="Benes V."/>
            <person name="Rechmann S."/>
            <person name="Borkova D."/>
            <person name="Bloecker H."/>
            <person name="Scharfe M."/>
            <person name="Grimm M."/>
            <person name="Loehnert T.-H."/>
            <person name="Dose S."/>
            <person name="de Haan M."/>
            <person name="Maarse A.C."/>
            <person name="Schaefer M."/>
            <person name="Mueller-Auer S."/>
            <person name="Gabel C."/>
            <person name="Fuchs M."/>
            <person name="Fartmann B."/>
            <person name="Granderath K."/>
            <person name="Dauner D."/>
            <person name="Herzl A."/>
            <person name="Neumann S."/>
            <person name="Argiriou A."/>
            <person name="Vitale D."/>
            <person name="Liguori R."/>
            <person name="Piravandi E."/>
            <person name="Massenet O."/>
            <person name="Quigley F."/>
            <person name="Clabauld G."/>
            <person name="Muendlein A."/>
            <person name="Felber R."/>
            <person name="Schnabl S."/>
            <person name="Hiller R."/>
            <person name="Schmidt W."/>
            <person name="Lecharny A."/>
            <person name="Aubourg S."/>
            <person name="Chefdor F."/>
            <person name="Cooke R."/>
            <person name="Berger C."/>
            <person name="Monfort A."/>
            <person name="Casacuberta E."/>
            <person name="Gibbons T."/>
            <person name="Weber N."/>
            <person name="Vandenbol M."/>
            <person name="Bargues M."/>
            <person name="Terol J."/>
            <person name="Torres A."/>
            <person name="Perez-Perez A."/>
            <person name="Purnelle B."/>
            <person name="Bent E."/>
            <person name="Johnson S."/>
            <person name="Tacon D."/>
            <person name="Jesse T."/>
            <person name="Heijnen L."/>
            <person name="Schwarz S."/>
            <person name="Scholler P."/>
            <person name="Heber S."/>
            <person name="Francs P."/>
            <person name="Bielke C."/>
            <person name="Frishman D."/>
            <person name="Haase D."/>
            <person name="Lemcke K."/>
            <person name="Mewes H.-W."/>
            <person name="Stocker S."/>
            <person name="Zaccaria P."/>
            <person name="Bevan M."/>
            <person name="Wilson R.K."/>
            <person name="de la Bastide M."/>
            <person name="Habermann K."/>
            <person name="Parnell L."/>
            <person name="Dedhia N."/>
            <person name="Gnoj L."/>
            <person name="Schutz K."/>
            <person name="Huang E."/>
            <person name="Spiegel L."/>
            <person name="Sekhon M."/>
            <person name="Murray J."/>
            <person name="Sheet P."/>
            <person name="Cordes M."/>
            <person name="Abu-Threideh J."/>
            <person name="Stoneking T."/>
            <person name="Kalicki J."/>
            <person name="Graves T."/>
            <person name="Harmon G."/>
            <person name="Edwards J."/>
            <person name="Latreille P."/>
            <person name="Courtney L."/>
            <person name="Cloud J."/>
            <person name="Abbott A."/>
            <person name="Scott K."/>
            <person name="Johnson D."/>
            <person name="Minx P."/>
            <person name="Bentley D."/>
            <person name="Fulton B."/>
            <person name="Miller N."/>
            <person name="Greco T."/>
            <person name="Kemp K."/>
            <person name="Kramer J."/>
            <person name="Fulton L."/>
            <person name="Mardis E."/>
            <person name="Dante M."/>
            <person name="Pepin K."/>
            <person name="Hillier L.W."/>
            <person name="Nelson J."/>
            <person name="Spieth J."/>
            <person name="Ryan E."/>
            <person name="Andrews S."/>
            <person name="Geisel C."/>
            <person name="Layman D."/>
            <person name="Du H."/>
            <person name="Ali J."/>
            <person name="Berghoff A."/>
            <person name="Jones K."/>
            <person name="Drone K."/>
            <person name="Cotton M."/>
            <person name="Joshu C."/>
            <person name="Antonoiu B."/>
            <person name="Zidanic M."/>
            <person name="Strong C."/>
            <person name="Sun H."/>
            <person name="Lamar B."/>
            <person name="Yordan C."/>
            <person name="Ma P."/>
            <person name="Zhong J."/>
            <person name="Preston R."/>
            <person name="Vil D."/>
            <person name="Shekher M."/>
            <person name="Matero A."/>
            <person name="Shah R."/>
            <person name="Swaby I.K."/>
            <person name="O'Shaughnessy A."/>
            <person name="Rodriguez M."/>
            <person name="Hoffman J."/>
            <person name="Till S."/>
            <person name="Granat S."/>
            <person name="Shohdy N."/>
            <person name="Hasegawa A."/>
            <person name="Hameed A."/>
            <person name="Lodhi M."/>
            <person name="Johnson A."/>
            <person name="Chen E."/>
            <person name="Marra M.A."/>
            <person name="Martienssen R."/>
            <person name="McCombie W.R."/>
        </authorList>
    </citation>
    <scope>NUCLEOTIDE SEQUENCE [LARGE SCALE GENOMIC DNA]</scope>
    <source>
        <strain>cv. Columbia</strain>
    </source>
</reference>
<reference key="3">
    <citation type="journal article" date="2017" name="Plant J.">
        <title>Araport11: a complete reannotation of the Arabidopsis thaliana reference genome.</title>
        <authorList>
            <person name="Cheng C.Y."/>
            <person name="Krishnakumar V."/>
            <person name="Chan A.P."/>
            <person name="Thibaud-Nissen F."/>
            <person name="Schobel S."/>
            <person name="Town C.D."/>
        </authorList>
    </citation>
    <scope>GENOME REANNOTATION</scope>
    <source>
        <strain>cv. Columbia</strain>
    </source>
</reference>
<reference key="4">
    <citation type="journal article" date="2003" name="Science">
        <title>Empirical analysis of transcriptional activity in the Arabidopsis genome.</title>
        <authorList>
            <person name="Yamada K."/>
            <person name="Lim J."/>
            <person name="Dale J.M."/>
            <person name="Chen H."/>
            <person name="Shinn P."/>
            <person name="Palm C.J."/>
            <person name="Southwick A.M."/>
            <person name="Wu H.C."/>
            <person name="Kim C.J."/>
            <person name="Nguyen M."/>
            <person name="Pham P.K."/>
            <person name="Cheuk R.F."/>
            <person name="Karlin-Newmann G."/>
            <person name="Liu S.X."/>
            <person name="Lam B."/>
            <person name="Sakano H."/>
            <person name="Wu T."/>
            <person name="Yu G."/>
            <person name="Miranda M."/>
            <person name="Quach H.L."/>
            <person name="Tripp M."/>
            <person name="Chang C.H."/>
            <person name="Lee J.M."/>
            <person name="Toriumi M.J."/>
            <person name="Chan M.M."/>
            <person name="Tang C.C."/>
            <person name="Onodera C.S."/>
            <person name="Deng J.M."/>
            <person name="Akiyama K."/>
            <person name="Ansari Y."/>
            <person name="Arakawa T."/>
            <person name="Banh J."/>
            <person name="Banno F."/>
            <person name="Bowser L."/>
            <person name="Brooks S.Y."/>
            <person name="Carninci P."/>
            <person name="Chao Q."/>
            <person name="Choy N."/>
            <person name="Enju A."/>
            <person name="Goldsmith A.D."/>
            <person name="Gurjal M."/>
            <person name="Hansen N.F."/>
            <person name="Hayashizaki Y."/>
            <person name="Johnson-Hopson C."/>
            <person name="Hsuan V.W."/>
            <person name="Iida K."/>
            <person name="Karnes M."/>
            <person name="Khan S."/>
            <person name="Koesema E."/>
            <person name="Ishida J."/>
            <person name="Jiang P.X."/>
            <person name="Jones T."/>
            <person name="Kawai J."/>
            <person name="Kamiya A."/>
            <person name="Meyers C."/>
            <person name="Nakajima M."/>
            <person name="Narusaka M."/>
            <person name="Seki M."/>
            <person name="Sakurai T."/>
            <person name="Satou M."/>
            <person name="Tamse R."/>
            <person name="Vaysberg M."/>
            <person name="Wallender E.K."/>
            <person name="Wong C."/>
            <person name="Yamamura Y."/>
            <person name="Yuan S."/>
            <person name="Shinozaki K."/>
            <person name="Davis R.W."/>
            <person name="Theologis A."/>
            <person name="Ecker J.R."/>
        </authorList>
    </citation>
    <scope>NUCLEOTIDE SEQUENCE [LARGE SCALE MRNA]</scope>
    <source>
        <strain>cv. Columbia</strain>
    </source>
</reference>
<reference key="5">
    <citation type="submission" date="2006-07" db="EMBL/GenBank/DDBJ databases">
        <title>Large-scale analysis of RIKEN Arabidopsis full-length (RAFL) cDNAs.</title>
        <authorList>
            <person name="Totoki Y."/>
            <person name="Seki M."/>
            <person name="Ishida J."/>
            <person name="Nakajima M."/>
            <person name="Enju A."/>
            <person name="Kamiya A."/>
            <person name="Narusaka M."/>
            <person name="Shin-i T."/>
            <person name="Nakagawa M."/>
            <person name="Sakamoto N."/>
            <person name="Oishi K."/>
            <person name="Kohara Y."/>
            <person name="Kobayashi M."/>
            <person name="Toyoda A."/>
            <person name="Sakaki Y."/>
            <person name="Sakurai T."/>
            <person name="Iida K."/>
            <person name="Akiyama K."/>
            <person name="Satou M."/>
            <person name="Toyoda T."/>
            <person name="Konagaya A."/>
            <person name="Carninci P."/>
            <person name="Kawai J."/>
            <person name="Hayashizaki Y."/>
            <person name="Shinozaki K."/>
        </authorList>
    </citation>
    <scope>NUCLEOTIDE SEQUENCE [LARGE SCALE MRNA]</scope>
    <source>
        <strain>cv. Columbia</strain>
    </source>
</reference>
<reference key="6">
    <citation type="journal article" date="2009" name="Plant Cell Rep.">
        <title>Characterization of three Arabidopsis homologs of human RING membrane anchor E3 ubiquitin ligase.</title>
        <authorList>
            <person name="Son O."/>
            <person name="Cho S.K."/>
            <person name="Kim E.Y."/>
            <person name="Kim W.T."/>
        </authorList>
    </citation>
    <scope>FUNCTION</scope>
    <scope>MUTAGENESIS OF CYS-36</scope>
    <scope>SUBCELLULAR LOCATION</scope>
    <scope>TISSUE SPECIFICITY</scope>
</reference>
<reference key="7">
    <citation type="journal article" date="2009" name="Plant Cell">
        <title>Drought stress-induced Rma1H1, a RING membrane-anchor E3 ubiquitin ligase homolog, regulates aquaporin levels via ubiquitination in transgenic Arabidopsis plants.</title>
        <authorList>
            <person name="Lee H.K."/>
            <person name="Cho S.K."/>
            <person name="Son O."/>
            <person name="Xu Z."/>
            <person name="Hwang I."/>
            <person name="Kim W.T."/>
        </authorList>
    </citation>
    <scope>DISRUPTION PHENOTYPE</scope>
</reference>
<reference key="8">
    <citation type="journal article" date="2010" name="Biochem. Biophys. Res. Commun.">
        <title>In vitro and in vivo interaction of AtRma2 E3 ubiquitin ligase and auxin-binding protein 1.</title>
        <authorList>
            <person name="Son O."/>
            <person name="Cho S.K."/>
            <person name="Kim S.J."/>
            <person name="Kim W.T."/>
        </authorList>
    </citation>
    <scope>FUNCTION</scope>
    <scope>INTERACTION WITH ERABP1</scope>
</reference>